<name>3MGH_AGRFC</name>
<comment type="similarity">
    <text evidence="1">Belongs to the DNA glycosylase MPG family.</text>
</comment>
<proteinExistence type="inferred from homology"/>
<organism>
    <name type="scientific">Agrobacterium fabrum (strain C58 / ATCC 33970)</name>
    <name type="common">Agrobacterium tumefaciens (strain C58)</name>
    <dbReference type="NCBI Taxonomy" id="176299"/>
    <lineage>
        <taxon>Bacteria</taxon>
        <taxon>Pseudomonadati</taxon>
        <taxon>Pseudomonadota</taxon>
        <taxon>Alphaproteobacteria</taxon>
        <taxon>Hyphomicrobiales</taxon>
        <taxon>Rhizobiaceae</taxon>
        <taxon>Rhizobium/Agrobacterium group</taxon>
        <taxon>Agrobacterium</taxon>
        <taxon>Agrobacterium tumefaciens complex</taxon>
    </lineage>
</organism>
<gene>
    <name type="ordered locus">Atu3335</name>
    <name type="ORF">AGR_L_2973</name>
</gene>
<sequence length="193" mass="21053">MNQSFSPEVPQSFFQRDALDVARALIGAEFRVGKAGGIIVETEAYHPDDPASHAFNGQTPRNRAMFGPAGHLYVYRSYGIHWCANFVCAPGSAVLLRAIEPLTGIDMMKLRRGTDKLKLLCSGPGKLCQAMAITGEMDGAPLNAPPFLLRLPKEAAAISTGRRIGISRAVDYPWRFGLEGSAFVSKKFEPDQR</sequence>
<accession>Q8UAN8</accession>
<keyword id="KW-0227">DNA damage</keyword>
<keyword id="KW-0234">DNA repair</keyword>
<keyword id="KW-0378">Hydrolase</keyword>
<keyword id="KW-1185">Reference proteome</keyword>
<protein>
    <recommendedName>
        <fullName>Putative 3-methyladenine DNA glycosylase</fullName>
        <ecNumber>3.2.2.-</ecNumber>
    </recommendedName>
</protein>
<reference key="1">
    <citation type="journal article" date="2001" name="Science">
        <title>The genome of the natural genetic engineer Agrobacterium tumefaciens C58.</title>
        <authorList>
            <person name="Wood D.W."/>
            <person name="Setubal J.C."/>
            <person name="Kaul R."/>
            <person name="Monks D.E."/>
            <person name="Kitajima J.P."/>
            <person name="Okura V.K."/>
            <person name="Zhou Y."/>
            <person name="Chen L."/>
            <person name="Wood G.E."/>
            <person name="Almeida N.F. Jr."/>
            <person name="Woo L."/>
            <person name="Chen Y."/>
            <person name="Paulsen I.T."/>
            <person name="Eisen J.A."/>
            <person name="Karp P.D."/>
            <person name="Bovee D. Sr."/>
            <person name="Chapman P."/>
            <person name="Clendenning J."/>
            <person name="Deatherage G."/>
            <person name="Gillet W."/>
            <person name="Grant C."/>
            <person name="Kutyavin T."/>
            <person name="Levy R."/>
            <person name="Li M.-J."/>
            <person name="McClelland E."/>
            <person name="Palmieri A."/>
            <person name="Raymond C."/>
            <person name="Rouse G."/>
            <person name="Saenphimmachak C."/>
            <person name="Wu Z."/>
            <person name="Romero P."/>
            <person name="Gordon D."/>
            <person name="Zhang S."/>
            <person name="Yoo H."/>
            <person name="Tao Y."/>
            <person name="Biddle P."/>
            <person name="Jung M."/>
            <person name="Krespan W."/>
            <person name="Perry M."/>
            <person name="Gordon-Kamm B."/>
            <person name="Liao L."/>
            <person name="Kim S."/>
            <person name="Hendrick C."/>
            <person name="Zhao Z.-Y."/>
            <person name="Dolan M."/>
            <person name="Chumley F."/>
            <person name="Tingey S.V."/>
            <person name="Tomb J.-F."/>
            <person name="Gordon M.P."/>
            <person name="Olson M.V."/>
            <person name="Nester E.W."/>
        </authorList>
    </citation>
    <scope>NUCLEOTIDE SEQUENCE [LARGE SCALE GENOMIC DNA]</scope>
    <source>
        <strain>C58 / ATCC 33970</strain>
    </source>
</reference>
<reference key="2">
    <citation type="journal article" date="2001" name="Science">
        <title>Genome sequence of the plant pathogen and biotechnology agent Agrobacterium tumefaciens C58.</title>
        <authorList>
            <person name="Goodner B."/>
            <person name="Hinkle G."/>
            <person name="Gattung S."/>
            <person name="Miller N."/>
            <person name="Blanchard M."/>
            <person name="Qurollo B."/>
            <person name="Goldman B.S."/>
            <person name="Cao Y."/>
            <person name="Askenazi M."/>
            <person name="Halling C."/>
            <person name="Mullin L."/>
            <person name="Houmiel K."/>
            <person name="Gordon J."/>
            <person name="Vaudin M."/>
            <person name="Iartchouk O."/>
            <person name="Epp A."/>
            <person name="Liu F."/>
            <person name="Wollam C."/>
            <person name="Allinger M."/>
            <person name="Doughty D."/>
            <person name="Scott C."/>
            <person name="Lappas C."/>
            <person name="Markelz B."/>
            <person name="Flanagan C."/>
            <person name="Crowell C."/>
            <person name="Gurson J."/>
            <person name="Lomo C."/>
            <person name="Sear C."/>
            <person name="Strub G."/>
            <person name="Cielo C."/>
            <person name="Slater S."/>
        </authorList>
    </citation>
    <scope>NUCLEOTIDE SEQUENCE [LARGE SCALE GENOMIC DNA]</scope>
    <source>
        <strain>C58 / ATCC 33970</strain>
    </source>
</reference>
<evidence type="ECO:0000305" key="1"/>
<dbReference type="EC" id="3.2.2.-"/>
<dbReference type="EMBL" id="AE007870">
    <property type="protein sequence ID" value="AAK90056.2"/>
    <property type="molecule type" value="Genomic_DNA"/>
</dbReference>
<dbReference type="PIR" id="AF2966">
    <property type="entry name" value="AF2966"/>
</dbReference>
<dbReference type="PIR" id="F98316">
    <property type="entry name" value="F98316"/>
</dbReference>
<dbReference type="RefSeq" id="NP_357271.2">
    <property type="nucleotide sequence ID" value="NC_003063.2"/>
</dbReference>
<dbReference type="RefSeq" id="WP_010972952.1">
    <property type="nucleotide sequence ID" value="NC_003063.2"/>
</dbReference>
<dbReference type="SMR" id="Q8UAN8"/>
<dbReference type="STRING" id="176299.Atu3335"/>
<dbReference type="EnsemblBacteria" id="AAK90056">
    <property type="protein sequence ID" value="AAK90056"/>
    <property type="gene ID" value="Atu3335"/>
</dbReference>
<dbReference type="GeneID" id="1135209"/>
<dbReference type="KEGG" id="atu:Atu3335"/>
<dbReference type="PATRIC" id="fig|176299.10.peg.3174"/>
<dbReference type="eggNOG" id="COG2094">
    <property type="taxonomic scope" value="Bacteria"/>
</dbReference>
<dbReference type="HOGENOM" id="CLU_060471_4_1_5"/>
<dbReference type="OrthoDB" id="9794313at2"/>
<dbReference type="PhylomeDB" id="Q8UAN8"/>
<dbReference type="BioCyc" id="AGRO:ATU3335-MONOMER"/>
<dbReference type="Proteomes" id="UP000000813">
    <property type="component" value="Chromosome linear"/>
</dbReference>
<dbReference type="GO" id="GO:0003905">
    <property type="term" value="F:alkylbase DNA N-glycosylase activity"/>
    <property type="evidence" value="ECO:0007669"/>
    <property type="project" value="InterPro"/>
</dbReference>
<dbReference type="GO" id="GO:0003677">
    <property type="term" value="F:DNA binding"/>
    <property type="evidence" value="ECO:0007669"/>
    <property type="project" value="InterPro"/>
</dbReference>
<dbReference type="GO" id="GO:0006284">
    <property type="term" value="P:base-excision repair"/>
    <property type="evidence" value="ECO:0007669"/>
    <property type="project" value="InterPro"/>
</dbReference>
<dbReference type="CDD" id="cd00540">
    <property type="entry name" value="AAG"/>
    <property type="match status" value="1"/>
</dbReference>
<dbReference type="FunFam" id="3.10.300.10:FF:000001">
    <property type="entry name" value="Putative 3-methyladenine DNA glycosylase"/>
    <property type="match status" value="1"/>
</dbReference>
<dbReference type="Gene3D" id="3.10.300.10">
    <property type="entry name" value="Methylpurine-DNA glycosylase (MPG)"/>
    <property type="match status" value="1"/>
</dbReference>
<dbReference type="HAMAP" id="MF_00527">
    <property type="entry name" value="3MGH"/>
    <property type="match status" value="1"/>
</dbReference>
<dbReference type="InterPro" id="IPR011034">
    <property type="entry name" value="Formyl_transferase-like_C_sf"/>
</dbReference>
<dbReference type="InterPro" id="IPR003180">
    <property type="entry name" value="MPG"/>
</dbReference>
<dbReference type="InterPro" id="IPR036995">
    <property type="entry name" value="MPG_sf"/>
</dbReference>
<dbReference type="NCBIfam" id="TIGR00567">
    <property type="entry name" value="3mg"/>
    <property type="match status" value="1"/>
</dbReference>
<dbReference type="NCBIfam" id="NF002003">
    <property type="entry name" value="PRK00802.1-3"/>
    <property type="match status" value="1"/>
</dbReference>
<dbReference type="PANTHER" id="PTHR10429">
    <property type="entry name" value="DNA-3-METHYLADENINE GLYCOSYLASE"/>
    <property type="match status" value="1"/>
</dbReference>
<dbReference type="PANTHER" id="PTHR10429:SF0">
    <property type="entry name" value="DNA-3-METHYLADENINE GLYCOSYLASE"/>
    <property type="match status" value="1"/>
</dbReference>
<dbReference type="Pfam" id="PF02245">
    <property type="entry name" value="Pur_DNA_glyco"/>
    <property type="match status" value="1"/>
</dbReference>
<dbReference type="SUPFAM" id="SSF50486">
    <property type="entry name" value="FMT C-terminal domain-like"/>
    <property type="match status" value="1"/>
</dbReference>
<feature type="chain" id="PRO_0000100070" description="Putative 3-methyladenine DNA glycosylase">
    <location>
        <begin position="1"/>
        <end position="193"/>
    </location>
</feature>